<protein>
    <recommendedName>
        <fullName>Uncharacterized protein C794.15</fullName>
    </recommendedName>
</protein>
<sequence length="86" mass="9941">MSTSRLLLPTTNQQQNSSPVIKEVDLNQNTPIPVVWQKTKKPPFVSFPRHEPSETIVISSKPRLFSFAKKIKPEAEQRKRKRTTEI</sequence>
<reference key="1">
    <citation type="journal article" date="2002" name="Nature">
        <title>The genome sequence of Schizosaccharomyces pombe.</title>
        <authorList>
            <person name="Wood V."/>
            <person name="Gwilliam R."/>
            <person name="Rajandream M.A."/>
            <person name="Lyne M.H."/>
            <person name="Lyne R."/>
            <person name="Stewart A."/>
            <person name="Sgouros J.G."/>
            <person name="Peat N."/>
            <person name="Hayles J."/>
            <person name="Baker S.G."/>
            <person name="Basham D."/>
            <person name="Bowman S."/>
            <person name="Brooks K."/>
            <person name="Brown D."/>
            <person name="Brown S."/>
            <person name="Chillingworth T."/>
            <person name="Churcher C.M."/>
            <person name="Collins M."/>
            <person name="Connor R."/>
            <person name="Cronin A."/>
            <person name="Davis P."/>
            <person name="Feltwell T."/>
            <person name="Fraser A."/>
            <person name="Gentles S."/>
            <person name="Goble A."/>
            <person name="Hamlin N."/>
            <person name="Harris D.E."/>
            <person name="Hidalgo J."/>
            <person name="Hodgson G."/>
            <person name="Holroyd S."/>
            <person name="Hornsby T."/>
            <person name="Howarth S."/>
            <person name="Huckle E.J."/>
            <person name="Hunt S."/>
            <person name="Jagels K."/>
            <person name="James K.D."/>
            <person name="Jones L."/>
            <person name="Jones M."/>
            <person name="Leather S."/>
            <person name="McDonald S."/>
            <person name="McLean J."/>
            <person name="Mooney P."/>
            <person name="Moule S."/>
            <person name="Mungall K.L."/>
            <person name="Murphy L.D."/>
            <person name="Niblett D."/>
            <person name="Odell C."/>
            <person name="Oliver K."/>
            <person name="O'Neil S."/>
            <person name="Pearson D."/>
            <person name="Quail M.A."/>
            <person name="Rabbinowitsch E."/>
            <person name="Rutherford K.M."/>
            <person name="Rutter S."/>
            <person name="Saunders D."/>
            <person name="Seeger K."/>
            <person name="Sharp S."/>
            <person name="Skelton J."/>
            <person name="Simmonds M.N."/>
            <person name="Squares R."/>
            <person name="Squares S."/>
            <person name="Stevens K."/>
            <person name="Taylor K."/>
            <person name="Taylor R.G."/>
            <person name="Tivey A."/>
            <person name="Walsh S.V."/>
            <person name="Warren T."/>
            <person name="Whitehead S."/>
            <person name="Woodward J.R."/>
            <person name="Volckaert G."/>
            <person name="Aert R."/>
            <person name="Robben J."/>
            <person name="Grymonprez B."/>
            <person name="Weltjens I."/>
            <person name="Vanstreels E."/>
            <person name="Rieger M."/>
            <person name="Schaefer M."/>
            <person name="Mueller-Auer S."/>
            <person name="Gabel C."/>
            <person name="Fuchs M."/>
            <person name="Duesterhoeft A."/>
            <person name="Fritzc C."/>
            <person name="Holzer E."/>
            <person name="Moestl D."/>
            <person name="Hilbert H."/>
            <person name="Borzym K."/>
            <person name="Langer I."/>
            <person name="Beck A."/>
            <person name="Lehrach H."/>
            <person name="Reinhardt R."/>
            <person name="Pohl T.M."/>
            <person name="Eger P."/>
            <person name="Zimmermann W."/>
            <person name="Wedler H."/>
            <person name="Wambutt R."/>
            <person name="Purnelle B."/>
            <person name="Goffeau A."/>
            <person name="Cadieu E."/>
            <person name="Dreano S."/>
            <person name="Gloux S."/>
            <person name="Lelaure V."/>
            <person name="Mottier S."/>
            <person name="Galibert F."/>
            <person name="Aves S.J."/>
            <person name="Xiang Z."/>
            <person name="Hunt C."/>
            <person name="Moore K."/>
            <person name="Hurst S.M."/>
            <person name="Lucas M."/>
            <person name="Rochet M."/>
            <person name="Gaillardin C."/>
            <person name="Tallada V.A."/>
            <person name="Garzon A."/>
            <person name="Thode G."/>
            <person name="Daga R.R."/>
            <person name="Cruzado L."/>
            <person name="Jimenez J."/>
            <person name="Sanchez M."/>
            <person name="del Rey F."/>
            <person name="Benito J."/>
            <person name="Dominguez A."/>
            <person name="Revuelta J.L."/>
            <person name="Moreno S."/>
            <person name="Armstrong J."/>
            <person name="Forsburg S.L."/>
            <person name="Cerutti L."/>
            <person name="Lowe T."/>
            <person name="McCombie W.R."/>
            <person name="Paulsen I."/>
            <person name="Potashkin J."/>
            <person name="Shpakovski G.V."/>
            <person name="Ussery D."/>
            <person name="Barrell B.G."/>
            <person name="Nurse P."/>
        </authorList>
    </citation>
    <scope>NUCLEOTIDE SEQUENCE [LARGE SCALE GENOMIC DNA]</scope>
    <source>
        <strain>972 / ATCC 24843</strain>
    </source>
</reference>
<keyword id="KW-1185">Reference proteome</keyword>
<accession>Q9USI0</accession>
<dbReference type="EMBL" id="CU329672">
    <property type="protein sequence ID" value="CAB62381.1"/>
    <property type="molecule type" value="Genomic_DNA"/>
</dbReference>
<dbReference type="RefSeq" id="NP_587761.1">
    <property type="nucleotide sequence ID" value="NM_001022754.2"/>
</dbReference>
<dbReference type="BioGRID" id="275865">
    <property type="interactions" value="1"/>
</dbReference>
<dbReference type="STRING" id="284812.Q9USI0"/>
<dbReference type="iPTMnet" id="Q9USI0"/>
<dbReference type="PaxDb" id="4896-SPCC794.15.1"/>
<dbReference type="EnsemblFungi" id="SPCC794.15.1">
    <property type="protein sequence ID" value="SPCC794.15.1:pep"/>
    <property type="gene ID" value="SPCC794.15"/>
</dbReference>
<dbReference type="PomBase" id="SPCC794.15"/>
<dbReference type="VEuPathDB" id="FungiDB:SPCC794.15"/>
<dbReference type="HOGENOM" id="CLU_2499160_0_0_1"/>
<dbReference type="InParanoid" id="Q9USI0"/>
<dbReference type="PRO" id="PR:Q9USI0"/>
<dbReference type="Proteomes" id="UP000002485">
    <property type="component" value="Chromosome III"/>
</dbReference>
<dbReference type="GO" id="GO:0005829">
    <property type="term" value="C:cytosol"/>
    <property type="evidence" value="ECO:0007005"/>
    <property type="project" value="PomBase"/>
</dbReference>
<dbReference type="GO" id="GO:0005634">
    <property type="term" value="C:nucleus"/>
    <property type="evidence" value="ECO:0007005"/>
    <property type="project" value="PomBase"/>
</dbReference>
<feature type="chain" id="PRO_0000116556" description="Uncharacterized protein C794.15">
    <location>
        <begin position="1"/>
        <end position="86"/>
    </location>
</feature>
<gene>
    <name type="ORF">SPCC794.15</name>
</gene>
<name>YCTF_SCHPO</name>
<proteinExistence type="predicted"/>
<organism>
    <name type="scientific">Schizosaccharomyces pombe (strain 972 / ATCC 24843)</name>
    <name type="common">Fission yeast</name>
    <dbReference type="NCBI Taxonomy" id="284812"/>
    <lineage>
        <taxon>Eukaryota</taxon>
        <taxon>Fungi</taxon>
        <taxon>Dikarya</taxon>
        <taxon>Ascomycota</taxon>
        <taxon>Taphrinomycotina</taxon>
        <taxon>Schizosaccharomycetes</taxon>
        <taxon>Schizosaccharomycetales</taxon>
        <taxon>Schizosaccharomycetaceae</taxon>
        <taxon>Schizosaccharomyces</taxon>
    </lineage>
</organism>